<keyword id="KW-1015">Disulfide bond</keyword>
<keyword id="KW-0325">Glycoprotein</keyword>
<keyword id="KW-0472">Membrane</keyword>
<keyword id="KW-0675">Receptor</keyword>
<keyword id="KW-1185">Reference proteome</keyword>
<keyword id="KW-0732">Signal</keyword>
<keyword id="KW-0812">Transmembrane</keyword>
<keyword id="KW-1133">Transmembrane helix</keyword>
<name>FSLQ_DICDI</name>
<comment type="subcellular location">
    <subcellularLocation>
        <location evidence="4">Membrane</location>
        <topology evidence="4">Multi-pass membrane protein</topology>
    </subcellularLocation>
</comment>
<comment type="similarity">
    <text evidence="4">Belongs to the G-protein coupled receptor Fz/Smo family.</text>
</comment>
<accession>Q1ZXE4</accession>
<sequence length="578" mass="65439">MKNSFLINILIIYYLFIILFVNSQDLKLGGSCELIDSNSPCFSKLNYTNFYLQPGDSITQLNKNVSDIIRMLEFTTPECKPNAINIMCLKSYPKCETYNETLSNNTNIIFNLPSLPCNSICLKAETPCKIFIDNFIKDLSCNSNFSNGAPMFPINSTDYEFKESGNFNFNVECNDNIIYDNSSSVINCPAPLLNSKDHVIPGKTTYYYITDSCILDCPFEIYPGKTKILDRTNYTLTSISFITCIFMILTFGVLPNKITHRMESILSFACGGCITALSLFIQSRQDNFNCSSDPGRFKSQSDYLCLLTGLIFQFGAITSIFWSPMIAYDFYITSTLGKIRKFGLYRIVLWSFIFVLTALPAFGGKYSATVATNCWINSDDGSAWQYVSFYIPSWCAMGLICLFSILSVINVSKMYIQTPNNRILFFNIKILITLLLFLFVLTFASSLKFYMEERMDTYFDAIAVWVECIGKGDPSQCELHAPGYDLKALNIVVIGILGFTVFIGYGLDPIVIHIWMESKKFQWVLKKCRLDKIIKLNNSINNSNNNNNETASTSSGNERKQTTVKMSNLKSTEINQQP</sequence>
<proteinExistence type="inferred from homology"/>
<feature type="signal peptide" evidence="1">
    <location>
        <begin position="1"/>
        <end position="23"/>
    </location>
</feature>
<feature type="chain" id="PRO_0000371378" description="Frizzled and smoothened-like protein Q">
    <location>
        <begin position="24"/>
        <end position="578"/>
    </location>
</feature>
<feature type="topological domain" description="Extracellular" evidence="1">
    <location>
        <begin position="24"/>
        <end position="233"/>
    </location>
</feature>
<feature type="transmembrane region" description="Helical; Name=1" evidence="1">
    <location>
        <begin position="234"/>
        <end position="254"/>
    </location>
</feature>
<feature type="topological domain" description="Cytoplasmic" evidence="1">
    <location>
        <begin position="255"/>
        <end position="261"/>
    </location>
</feature>
<feature type="transmembrane region" description="Helical; Name=2" evidence="1">
    <location>
        <begin position="262"/>
        <end position="282"/>
    </location>
</feature>
<feature type="topological domain" description="Extracellular" evidence="1">
    <location>
        <begin position="283"/>
        <end position="305"/>
    </location>
</feature>
<feature type="transmembrane region" description="Helical; Name=3" evidence="1">
    <location>
        <begin position="306"/>
        <end position="326"/>
    </location>
</feature>
<feature type="topological domain" description="Cytoplasmic" evidence="1">
    <location>
        <begin position="327"/>
        <end position="341"/>
    </location>
</feature>
<feature type="transmembrane region" description="Helical; Name=4" evidence="1">
    <location>
        <begin position="342"/>
        <end position="362"/>
    </location>
</feature>
<feature type="topological domain" description="Extracellular" evidence="1">
    <location>
        <begin position="363"/>
        <end position="388"/>
    </location>
</feature>
<feature type="transmembrane region" description="Helical; Name=5" evidence="1">
    <location>
        <begin position="389"/>
        <end position="409"/>
    </location>
</feature>
<feature type="topological domain" description="Cytoplasmic" evidence="1">
    <location>
        <begin position="410"/>
        <end position="422"/>
    </location>
</feature>
<feature type="transmembrane region" description="Helical; Name=6" evidence="1">
    <location>
        <begin position="423"/>
        <end position="443"/>
    </location>
</feature>
<feature type="topological domain" description="Extracellular" evidence="1">
    <location>
        <begin position="444"/>
        <end position="490"/>
    </location>
</feature>
<feature type="transmembrane region" description="Helical; Name=7" evidence="1">
    <location>
        <begin position="491"/>
        <end position="511"/>
    </location>
</feature>
<feature type="topological domain" description="Cytoplasmic" evidence="1">
    <location>
        <begin position="512"/>
        <end position="578"/>
    </location>
</feature>
<feature type="domain" description="FZ" evidence="2">
    <location>
        <begin position="27"/>
        <end position="157"/>
    </location>
</feature>
<feature type="region of interest" description="Disordered" evidence="3">
    <location>
        <begin position="544"/>
        <end position="578"/>
    </location>
</feature>
<feature type="compositionally biased region" description="Low complexity" evidence="3">
    <location>
        <begin position="544"/>
        <end position="556"/>
    </location>
</feature>
<feature type="compositionally biased region" description="Polar residues" evidence="3">
    <location>
        <begin position="563"/>
        <end position="578"/>
    </location>
</feature>
<feature type="glycosylation site" description="N-linked (GlcNAc...) asparagine" evidence="1">
    <location>
        <position position="46"/>
    </location>
</feature>
<feature type="glycosylation site" description="N-linked (GlcNAc...) asparagine" evidence="1">
    <location>
        <position position="64"/>
    </location>
</feature>
<feature type="glycosylation site" description="N-linked (GlcNAc...) asparagine" evidence="1">
    <location>
        <position position="99"/>
    </location>
</feature>
<feature type="glycosylation site" description="N-linked (GlcNAc...) asparagine" evidence="1">
    <location>
        <position position="104"/>
    </location>
</feature>
<feature type="glycosylation site" description="N-linked (GlcNAc...) asparagine" evidence="1">
    <location>
        <position position="144"/>
    </location>
</feature>
<feature type="glycosylation site" description="N-linked (GlcNAc...) asparagine" evidence="1">
    <location>
        <position position="155"/>
    </location>
</feature>
<feature type="glycosylation site" description="N-linked (GlcNAc...) asparagine" evidence="1">
    <location>
        <position position="181"/>
    </location>
</feature>
<feature type="glycosylation site" description="N-linked (GlcNAc...) asparagine" evidence="1">
    <location>
        <position position="233"/>
    </location>
</feature>
<feature type="glycosylation site" description="N-linked (GlcNAc...) asparagine" evidence="1">
    <location>
        <position position="289"/>
    </location>
</feature>
<feature type="disulfide bond" evidence="2">
    <location>
        <begin position="32"/>
        <end position="95"/>
    </location>
</feature>
<feature type="disulfide bond" evidence="2">
    <location>
        <begin position="41"/>
        <end position="88"/>
    </location>
</feature>
<feature type="disulfide bond" evidence="2">
    <location>
        <begin position="79"/>
        <end position="128"/>
    </location>
</feature>
<feature type="disulfide bond" evidence="2">
    <location>
        <begin position="121"/>
        <end position="141"/>
    </location>
</feature>
<protein>
    <recommendedName>
        <fullName>Frizzled and smoothened-like protein Q</fullName>
    </recommendedName>
</protein>
<dbReference type="EMBL" id="AAFI02000089">
    <property type="protein sequence ID" value="EAS66849.1"/>
    <property type="molecule type" value="Genomic_DNA"/>
</dbReference>
<dbReference type="RefSeq" id="XP_001134532.1">
    <property type="nucleotide sequence ID" value="XM_001134532.1"/>
</dbReference>
<dbReference type="SMR" id="Q1ZXE4"/>
<dbReference type="FunCoup" id="Q1ZXE4">
    <property type="interactions" value="8"/>
</dbReference>
<dbReference type="STRING" id="44689.Q1ZXE4"/>
<dbReference type="GlyCosmos" id="Q1ZXE4">
    <property type="glycosylation" value="9 sites, No reported glycans"/>
</dbReference>
<dbReference type="GlyGen" id="Q1ZXE4">
    <property type="glycosylation" value="9 sites"/>
</dbReference>
<dbReference type="PaxDb" id="44689-DDB0232055"/>
<dbReference type="EnsemblProtists" id="EAS66849">
    <property type="protein sequence ID" value="EAS66849"/>
    <property type="gene ID" value="DDB_G0286609"/>
</dbReference>
<dbReference type="GeneID" id="8625704"/>
<dbReference type="KEGG" id="ddi:DDB_G0286609"/>
<dbReference type="dictyBase" id="DDB_G0286609">
    <property type="gene designation" value="fslQ"/>
</dbReference>
<dbReference type="VEuPathDB" id="AmoebaDB:DDB_G0286609"/>
<dbReference type="eggNOG" id="ENOG502RGJ6">
    <property type="taxonomic scope" value="Eukaryota"/>
</dbReference>
<dbReference type="HOGENOM" id="CLU_447205_0_0_1"/>
<dbReference type="InParanoid" id="Q1ZXE4"/>
<dbReference type="OMA" id="IMISIAY"/>
<dbReference type="PhylomeDB" id="Q1ZXE4"/>
<dbReference type="PRO" id="PR:Q1ZXE4"/>
<dbReference type="Proteomes" id="UP000002195">
    <property type="component" value="Chromosome 4"/>
</dbReference>
<dbReference type="GO" id="GO:0016020">
    <property type="term" value="C:membrane"/>
    <property type="evidence" value="ECO:0007669"/>
    <property type="project" value="UniProtKB-SubCell"/>
</dbReference>
<dbReference type="Gene3D" id="1.10.2000.10">
    <property type="entry name" value="Frizzled cysteine-rich domain"/>
    <property type="match status" value="1"/>
</dbReference>
<dbReference type="Gene3D" id="1.20.1070.10">
    <property type="entry name" value="Rhodopsin 7-helix transmembrane proteins"/>
    <property type="match status" value="1"/>
</dbReference>
<dbReference type="InterPro" id="IPR020067">
    <property type="entry name" value="Frizzled_dom"/>
</dbReference>
<dbReference type="InterPro" id="IPR036790">
    <property type="entry name" value="Frizzled_dom_sf"/>
</dbReference>
<dbReference type="InterPro" id="IPR050949">
    <property type="entry name" value="GPCR_Fz/Smo-like"/>
</dbReference>
<dbReference type="PANTHER" id="PTHR31787:SF15">
    <property type="entry name" value="FRIZZLED AND SMOOTHENED-LIKE PROTEIN P-RELATED"/>
    <property type="match status" value="1"/>
</dbReference>
<dbReference type="PANTHER" id="PTHR31787">
    <property type="entry name" value="G-PROTEIN-COUPLED RECEPTOR GPCR FAMILY PROTEIN"/>
    <property type="match status" value="1"/>
</dbReference>
<dbReference type="SUPFAM" id="SSF63501">
    <property type="entry name" value="Frizzled cysteine-rich domain"/>
    <property type="match status" value="1"/>
</dbReference>
<dbReference type="PROSITE" id="PS50038">
    <property type="entry name" value="FZ"/>
    <property type="match status" value="1"/>
</dbReference>
<evidence type="ECO:0000255" key="1"/>
<evidence type="ECO:0000255" key="2">
    <source>
        <dbReference type="PROSITE-ProRule" id="PRU00090"/>
    </source>
</evidence>
<evidence type="ECO:0000256" key="3">
    <source>
        <dbReference type="SAM" id="MobiDB-lite"/>
    </source>
</evidence>
<evidence type="ECO:0000305" key="4"/>
<reference key="1">
    <citation type="journal article" date="2005" name="Nature">
        <title>The genome of the social amoeba Dictyostelium discoideum.</title>
        <authorList>
            <person name="Eichinger L."/>
            <person name="Pachebat J.A."/>
            <person name="Gloeckner G."/>
            <person name="Rajandream M.A."/>
            <person name="Sucgang R."/>
            <person name="Berriman M."/>
            <person name="Song J."/>
            <person name="Olsen R."/>
            <person name="Szafranski K."/>
            <person name="Xu Q."/>
            <person name="Tunggal B."/>
            <person name="Kummerfeld S."/>
            <person name="Madera M."/>
            <person name="Konfortov B.A."/>
            <person name="Rivero F."/>
            <person name="Bankier A.T."/>
            <person name="Lehmann R."/>
            <person name="Hamlin N."/>
            <person name="Davies R."/>
            <person name="Gaudet P."/>
            <person name="Fey P."/>
            <person name="Pilcher K."/>
            <person name="Chen G."/>
            <person name="Saunders D."/>
            <person name="Sodergren E.J."/>
            <person name="Davis P."/>
            <person name="Kerhornou A."/>
            <person name="Nie X."/>
            <person name="Hall N."/>
            <person name="Anjard C."/>
            <person name="Hemphill L."/>
            <person name="Bason N."/>
            <person name="Farbrother P."/>
            <person name="Desany B."/>
            <person name="Just E."/>
            <person name="Morio T."/>
            <person name="Rost R."/>
            <person name="Churcher C.M."/>
            <person name="Cooper J."/>
            <person name="Haydock S."/>
            <person name="van Driessche N."/>
            <person name="Cronin A."/>
            <person name="Goodhead I."/>
            <person name="Muzny D.M."/>
            <person name="Mourier T."/>
            <person name="Pain A."/>
            <person name="Lu M."/>
            <person name="Harper D."/>
            <person name="Lindsay R."/>
            <person name="Hauser H."/>
            <person name="James K.D."/>
            <person name="Quiles M."/>
            <person name="Madan Babu M."/>
            <person name="Saito T."/>
            <person name="Buchrieser C."/>
            <person name="Wardroper A."/>
            <person name="Felder M."/>
            <person name="Thangavelu M."/>
            <person name="Johnson D."/>
            <person name="Knights A."/>
            <person name="Loulseged H."/>
            <person name="Mungall K.L."/>
            <person name="Oliver K."/>
            <person name="Price C."/>
            <person name="Quail M.A."/>
            <person name="Urushihara H."/>
            <person name="Hernandez J."/>
            <person name="Rabbinowitsch E."/>
            <person name="Steffen D."/>
            <person name="Sanders M."/>
            <person name="Ma J."/>
            <person name="Kohara Y."/>
            <person name="Sharp S."/>
            <person name="Simmonds M.N."/>
            <person name="Spiegler S."/>
            <person name="Tivey A."/>
            <person name="Sugano S."/>
            <person name="White B."/>
            <person name="Walker D."/>
            <person name="Woodward J.R."/>
            <person name="Winckler T."/>
            <person name="Tanaka Y."/>
            <person name="Shaulsky G."/>
            <person name="Schleicher M."/>
            <person name="Weinstock G.M."/>
            <person name="Rosenthal A."/>
            <person name="Cox E.C."/>
            <person name="Chisholm R.L."/>
            <person name="Gibbs R.A."/>
            <person name="Loomis W.F."/>
            <person name="Platzer M."/>
            <person name="Kay R.R."/>
            <person name="Williams J.G."/>
            <person name="Dear P.H."/>
            <person name="Noegel A.A."/>
            <person name="Barrell B.G."/>
            <person name="Kuspa A."/>
        </authorList>
    </citation>
    <scope>NUCLEOTIDE SEQUENCE [LARGE SCALE GENOMIC DNA]</scope>
    <source>
        <strain>AX4</strain>
    </source>
</reference>
<reference key="2">
    <citation type="journal article" date="2006" name="Eur. J. Cell Biol.">
        <title>The Dictyostelium repertoire of seven transmembrane domain receptors.</title>
        <authorList>
            <person name="Prabhu Y."/>
            <person name="Eichinger L."/>
        </authorList>
    </citation>
    <scope>NOMENCLATURE</scope>
</reference>
<organism>
    <name type="scientific">Dictyostelium discoideum</name>
    <name type="common">Social amoeba</name>
    <dbReference type="NCBI Taxonomy" id="44689"/>
    <lineage>
        <taxon>Eukaryota</taxon>
        <taxon>Amoebozoa</taxon>
        <taxon>Evosea</taxon>
        <taxon>Eumycetozoa</taxon>
        <taxon>Dictyostelia</taxon>
        <taxon>Dictyosteliales</taxon>
        <taxon>Dictyosteliaceae</taxon>
        <taxon>Dictyostelium</taxon>
    </lineage>
</organism>
<gene>
    <name type="primary">fslQ</name>
    <name type="ORF">DDB_G0286609</name>
</gene>